<organism>
    <name type="scientific">Bacillus cereus (strain ATCC 10987 / NRS 248)</name>
    <dbReference type="NCBI Taxonomy" id="222523"/>
    <lineage>
        <taxon>Bacteria</taxon>
        <taxon>Bacillati</taxon>
        <taxon>Bacillota</taxon>
        <taxon>Bacilli</taxon>
        <taxon>Bacillales</taxon>
        <taxon>Bacillaceae</taxon>
        <taxon>Bacillus</taxon>
        <taxon>Bacillus cereus group</taxon>
    </lineage>
</organism>
<evidence type="ECO:0000255" key="1">
    <source>
        <dbReference type="HAMAP-Rule" id="MF_00365"/>
    </source>
</evidence>
<reference key="1">
    <citation type="journal article" date="2004" name="Nucleic Acids Res.">
        <title>The genome sequence of Bacillus cereus ATCC 10987 reveals metabolic adaptations and a large plasmid related to Bacillus anthracis pXO1.</title>
        <authorList>
            <person name="Rasko D.A."/>
            <person name="Ravel J."/>
            <person name="Oekstad O.A."/>
            <person name="Helgason E."/>
            <person name="Cer R.Z."/>
            <person name="Jiang L."/>
            <person name="Shores K.A."/>
            <person name="Fouts D.E."/>
            <person name="Tourasse N.J."/>
            <person name="Angiuoli S.V."/>
            <person name="Kolonay J.F."/>
            <person name="Nelson W.C."/>
            <person name="Kolstoe A.-B."/>
            <person name="Fraser C.M."/>
            <person name="Read T.D."/>
        </authorList>
    </citation>
    <scope>NUCLEOTIDE SEQUENCE [LARGE SCALE GENOMIC DNA]</scope>
    <source>
        <strain>ATCC 10987 / NRS 248</strain>
    </source>
</reference>
<gene>
    <name evidence="1" type="primary">recF</name>
    <name type="ordered locus">BCE_0004</name>
</gene>
<protein>
    <recommendedName>
        <fullName evidence="1">DNA replication and repair protein RecF</fullName>
    </recommendedName>
</protein>
<sequence>MFISEIQLKNYRNYEKLELSFEDKVNVIIGENAQGKTNLMEAIYVLAMAKSHRTSNDRELIRWDEDFGQIKGKLQKRNSSLSLELNISKKGKKAKLNQLEQQKLSQYIGVMNVVMFAPEDLNLVKGSPQVRRRFLDMELGQIAPVYLYELSQYQKVLTQRNHLLKKMQGNSKNEETMLDVFTLQLIEHGTKILQKRFEFLHLLQEWAAPIHRGISRGLEELEIVYKPSVDVSESMDLSKIKEVYYESFQSVKQREIFRGTTLIGPHRDDLQFFVNSKNVQVFGSQGQQRTTALSLKLAEIELIYSEVKEYPILLLDDVLSELDDYRQSHLLNTIQGKVQTFVTTTSVDGIEHETLKEAKTIHVTNGTVDCEIDRA</sequence>
<proteinExistence type="inferred from homology"/>
<comment type="function">
    <text evidence="1">The RecF protein is involved in DNA metabolism; it is required for DNA replication and normal SOS inducibility. RecF binds preferentially to single-stranded, linear DNA. It also seems to bind ATP.</text>
</comment>
<comment type="subcellular location">
    <subcellularLocation>
        <location evidence="1">Cytoplasm</location>
    </subcellularLocation>
</comment>
<comment type="similarity">
    <text evidence="1">Belongs to the RecF family.</text>
</comment>
<feature type="chain" id="PRO_0000196395" description="DNA replication and repair protein RecF">
    <location>
        <begin position="1"/>
        <end position="375"/>
    </location>
</feature>
<feature type="binding site" evidence="1">
    <location>
        <begin position="30"/>
        <end position="37"/>
    </location>
    <ligand>
        <name>ATP</name>
        <dbReference type="ChEBI" id="CHEBI:30616"/>
    </ligand>
</feature>
<keyword id="KW-0067">ATP-binding</keyword>
<keyword id="KW-0963">Cytoplasm</keyword>
<keyword id="KW-0227">DNA damage</keyword>
<keyword id="KW-0234">DNA repair</keyword>
<keyword id="KW-0235">DNA replication</keyword>
<keyword id="KW-0238">DNA-binding</keyword>
<keyword id="KW-0547">Nucleotide-binding</keyword>
<keyword id="KW-0742">SOS response</keyword>
<accession>Q73FK2</accession>
<dbReference type="EMBL" id="AE017194">
    <property type="protein sequence ID" value="AAS38940.1"/>
    <property type="molecule type" value="Genomic_DNA"/>
</dbReference>
<dbReference type="SMR" id="Q73FK2"/>
<dbReference type="KEGG" id="bca:BCE_0004"/>
<dbReference type="HOGENOM" id="CLU_040267_0_1_9"/>
<dbReference type="Proteomes" id="UP000002527">
    <property type="component" value="Chromosome"/>
</dbReference>
<dbReference type="GO" id="GO:0005737">
    <property type="term" value="C:cytoplasm"/>
    <property type="evidence" value="ECO:0007669"/>
    <property type="project" value="UniProtKB-SubCell"/>
</dbReference>
<dbReference type="GO" id="GO:0005524">
    <property type="term" value="F:ATP binding"/>
    <property type="evidence" value="ECO:0007669"/>
    <property type="project" value="UniProtKB-UniRule"/>
</dbReference>
<dbReference type="GO" id="GO:0003697">
    <property type="term" value="F:single-stranded DNA binding"/>
    <property type="evidence" value="ECO:0007669"/>
    <property type="project" value="UniProtKB-UniRule"/>
</dbReference>
<dbReference type="GO" id="GO:0006260">
    <property type="term" value="P:DNA replication"/>
    <property type="evidence" value="ECO:0007669"/>
    <property type="project" value="UniProtKB-UniRule"/>
</dbReference>
<dbReference type="GO" id="GO:0000731">
    <property type="term" value="P:DNA synthesis involved in DNA repair"/>
    <property type="evidence" value="ECO:0007669"/>
    <property type="project" value="TreeGrafter"/>
</dbReference>
<dbReference type="GO" id="GO:0006302">
    <property type="term" value="P:double-strand break repair"/>
    <property type="evidence" value="ECO:0007669"/>
    <property type="project" value="TreeGrafter"/>
</dbReference>
<dbReference type="GO" id="GO:0009432">
    <property type="term" value="P:SOS response"/>
    <property type="evidence" value="ECO:0007669"/>
    <property type="project" value="UniProtKB-UniRule"/>
</dbReference>
<dbReference type="CDD" id="cd03242">
    <property type="entry name" value="ABC_RecF"/>
    <property type="match status" value="1"/>
</dbReference>
<dbReference type="FunFam" id="1.20.1050.90:FF:000002">
    <property type="entry name" value="DNA replication and repair protein RecF"/>
    <property type="match status" value="1"/>
</dbReference>
<dbReference type="FunFam" id="3.40.50.300:FF:000400">
    <property type="entry name" value="DNA replication and repair protein RecF"/>
    <property type="match status" value="1"/>
</dbReference>
<dbReference type="Gene3D" id="3.40.50.300">
    <property type="entry name" value="P-loop containing nucleotide triphosphate hydrolases"/>
    <property type="match status" value="1"/>
</dbReference>
<dbReference type="Gene3D" id="1.20.1050.90">
    <property type="entry name" value="RecF/RecN/SMC, N-terminal domain"/>
    <property type="match status" value="1"/>
</dbReference>
<dbReference type="HAMAP" id="MF_00365">
    <property type="entry name" value="RecF"/>
    <property type="match status" value="1"/>
</dbReference>
<dbReference type="InterPro" id="IPR001238">
    <property type="entry name" value="DNA-binding_RecF"/>
</dbReference>
<dbReference type="InterPro" id="IPR018078">
    <property type="entry name" value="DNA-binding_RecF_CS"/>
</dbReference>
<dbReference type="InterPro" id="IPR027417">
    <property type="entry name" value="P-loop_NTPase"/>
</dbReference>
<dbReference type="InterPro" id="IPR003395">
    <property type="entry name" value="RecF/RecN/SMC_N"/>
</dbReference>
<dbReference type="InterPro" id="IPR042174">
    <property type="entry name" value="RecF_2"/>
</dbReference>
<dbReference type="NCBIfam" id="TIGR00611">
    <property type="entry name" value="recf"/>
    <property type="match status" value="1"/>
</dbReference>
<dbReference type="PANTHER" id="PTHR32182">
    <property type="entry name" value="DNA REPLICATION AND REPAIR PROTEIN RECF"/>
    <property type="match status" value="1"/>
</dbReference>
<dbReference type="PANTHER" id="PTHR32182:SF0">
    <property type="entry name" value="DNA REPLICATION AND REPAIR PROTEIN RECF"/>
    <property type="match status" value="1"/>
</dbReference>
<dbReference type="Pfam" id="PF02463">
    <property type="entry name" value="SMC_N"/>
    <property type="match status" value="1"/>
</dbReference>
<dbReference type="SUPFAM" id="SSF52540">
    <property type="entry name" value="P-loop containing nucleoside triphosphate hydrolases"/>
    <property type="match status" value="1"/>
</dbReference>
<dbReference type="PROSITE" id="PS00617">
    <property type="entry name" value="RECF_1"/>
    <property type="match status" value="1"/>
</dbReference>
<dbReference type="PROSITE" id="PS00618">
    <property type="entry name" value="RECF_2"/>
    <property type="match status" value="1"/>
</dbReference>
<name>RECF_BACC1</name>